<reference key="1">
    <citation type="journal article" date="2004" name="Nature">
        <title>Genome evolution in yeasts.</title>
        <authorList>
            <person name="Dujon B."/>
            <person name="Sherman D."/>
            <person name="Fischer G."/>
            <person name="Durrens P."/>
            <person name="Casaregola S."/>
            <person name="Lafontaine I."/>
            <person name="de Montigny J."/>
            <person name="Marck C."/>
            <person name="Neuveglise C."/>
            <person name="Talla E."/>
            <person name="Goffard N."/>
            <person name="Frangeul L."/>
            <person name="Aigle M."/>
            <person name="Anthouard V."/>
            <person name="Babour A."/>
            <person name="Barbe V."/>
            <person name="Barnay S."/>
            <person name="Blanchin S."/>
            <person name="Beckerich J.-M."/>
            <person name="Beyne E."/>
            <person name="Bleykasten C."/>
            <person name="Boisrame A."/>
            <person name="Boyer J."/>
            <person name="Cattolico L."/>
            <person name="Confanioleri F."/>
            <person name="de Daruvar A."/>
            <person name="Despons L."/>
            <person name="Fabre E."/>
            <person name="Fairhead C."/>
            <person name="Ferry-Dumazet H."/>
            <person name="Groppi A."/>
            <person name="Hantraye F."/>
            <person name="Hennequin C."/>
            <person name="Jauniaux N."/>
            <person name="Joyet P."/>
            <person name="Kachouri R."/>
            <person name="Kerrest A."/>
            <person name="Koszul R."/>
            <person name="Lemaire M."/>
            <person name="Lesur I."/>
            <person name="Ma L."/>
            <person name="Muller H."/>
            <person name="Nicaud J.-M."/>
            <person name="Nikolski M."/>
            <person name="Oztas S."/>
            <person name="Ozier-Kalogeropoulos O."/>
            <person name="Pellenz S."/>
            <person name="Potier S."/>
            <person name="Richard G.-F."/>
            <person name="Straub M.-L."/>
            <person name="Suleau A."/>
            <person name="Swennen D."/>
            <person name="Tekaia F."/>
            <person name="Wesolowski-Louvel M."/>
            <person name="Westhof E."/>
            <person name="Wirth B."/>
            <person name="Zeniou-Meyer M."/>
            <person name="Zivanovic Y."/>
            <person name="Bolotin-Fukuhara M."/>
            <person name="Thierry A."/>
            <person name="Bouchier C."/>
            <person name="Caudron B."/>
            <person name="Scarpelli C."/>
            <person name="Gaillardin C."/>
            <person name="Weissenbach J."/>
            <person name="Wincker P."/>
            <person name="Souciet J.-L."/>
        </authorList>
    </citation>
    <scope>NUCLEOTIDE SEQUENCE [LARGE SCALE GENOMIC DNA]</scope>
    <source>
        <strain>ATCC 8585 / CBS 2359 / DSM 70799 / NBRC 1267 / NRRL Y-1140 / WM37</strain>
    </source>
</reference>
<reference key="2">
    <citation type="journal article" date="2004" name="Biochim. Biophys. Acta">
        <title>Isolation and characterization of two nuclear genes encoding glutathione and thioredoxin reductases from the yeast Kluyveromyces lactis.</title>
        <authorList>
            <person name="Tarrio N."/>
            <person name="Diaz Prado S."/>
            <person name="Cerdan M.E."/>
            <person name="Gonzales Siso M.I."/>
        </authorList>
    </citation>
    <scope>NUCLEOTIDE SEQUENCE [GENOMIC DNA] OF 18-236</scope>
</reference>
<keyword id="KW-0002">3D-structure</keyword>
<keyword id="KW-0597">Phosphoprotein</keyword>
<keyword id="KW-1185">Reference proteome</keyword>
<keyword id="KW-0687">Ribonucleoprotein</keyword>
<keyword id="KW-0689">Ribosomal protein</keyword>
<proteinExistence type="evidence at protein level"/>
<evidence type="ECO:0000250" key="1"/>
<evidence type="ECO:0000255" key="2"/>
<evidence type="ECO:0000305" key="3"/>
<evidence type="ECO:0007829" key="4">
    <source>
        <dbReference type="PDB" id="8RW1"/>
    </source>
</evidence>
<gene>
    <name type="primary">RPS6</name>
    <name type="ordered locus">KLLA0E24090g</name>
</gene>
<accession>Q6CM04</accession>
<accession>Q6HA22</accession>
<protein>
    <recommendedName>
        <fullName evidence="3">Small ribosomal subunit protein eS6</fullName>
    </recommendedName>
    <alternativeName>
        <fullName>40S ribosomal protein S6</fullName>
    </alternativeName>
</protein>
<feature type="chain" id="PRO_0000137337" description="Small ribosomal subunit protein eS6">
    <location>
        <begin position="1"/>
        <end position="236"/>
    </location>
</feature>
<feature type="modified residue" description="Phosphoserine" evidence="2">
    <location>
        <position position="232"/>
    </location>
</feature>
<feature type="modified residue" description="Phosphoserine" evidence="2">
    <location>
        <position position="233"/>
    </location>
</feature>
<feature type="strand" evidence="4">
    <location>
        <begin position="2"/>
        <end position="7"/>
    </location>
</feature>
<feature type="turn" evidence="4">
    <location>
        <begin position="8"/>
        <end position="11"/>
    </location>
</feature>
<feature type="strand" evidence="4">
    <location>
        <begin position="12"/>
        <end position="17"/>
    </location>
</feature>
<feature type="turn" evidence="4">
    <location>
        <begin position="21"/>
        <end position="23"/>
    </location>
</feature>
<feature type="helix" evidence="4">
    <location>
        <begin position="24"/>
        <end position="27"/>
    </location>
</feature>
<feature type="strand" evidence="4">
    <location>
        <begin position="35"/>
        <end position="38"/>
    </location>
</feature>
<feature type="turn" evidence="4">
    <location>
        <begin position="39"/>
        <end position="41"/>
    </location>
</feature>
<feature type="strand" evidence="4">
    <location>
        <begin position="49"/>
        <end position="57"/>
    </location>
</feature>
<feature type="strand" evidence="4">
    <location>
        <begin position="70"/>
        <end position="77"/>
    </location>
</feature>
<feature type="strand" evidence="4">
    <location>
        <begin position="81"/>
        <end position="83"/>
    </location>
</feature>
<feature type="strand" evidence="4">
    <location>
        <begin position="93"/>
        <end position="98"/>
    </location>
</feature>
<feature type="strand" evidence="4">
    <location>
        <begin position="106"/>
        <end position="115"/>
    </location>
</feature>
<feature type="strand" evidence="4">
    <location>
        <begin position="122"/>
        <end position="126"/>
    </location>
</feature>
<feature type="helix" evidence="4">
    <location>
        <begin position="138"/>
        <end position="145"/>
    </location>
</feature>
<feature type="strand" evidence="4">
    <location>
        <begin position="149"/>
        <end position="151"/>
    </location>
</feature>
<feature type="turn" evidence="4">
    <location>
        <begin position="153"/>
        <end position="156"/>
    </location>
</feature>
<feature type="strand" evidence="4">
    <location>
        <begin position="160"/>
        <end position="163"/>
    </location>
</feature>
<feature type="strand" evidence="4">
    <location>
        <begin position="168"/>
        <end position="171"/>
    </location>
</feature>
<feature type="helix" evidence="4">
    <location>
        <begin position="181"/>
        <end position="229"/>
    </location>
</feature>
<dbReference type="EMBL" id="CR382125">
    <property type="protein sequence ID" value="CAH00122.1"/>
    <property type="molecule type" value="Genomic_DNA"/>
</dbReference>
<dbReference type="EMBL" id="AJ504414">
    <property type="protein sequence ID" value="CAD43214.1"/>
    <property type="molecule type" value="Genomic_DNA"/>
</dbReference>
<dbReference type="RefSeq" id="XP_455035.1">
    <property type="nucleotide sequence ID" value="XM_455035.1"/>
</dbReference>
<dbReference type="PDB" id="3J80">
    <property type="method" value="EM"/>
    <property type="resolution" value="3.75 A"/>
    <property type="chains" value="G=1-236"/>
</dbReference>
<dbReference type="PDB" id="3J81">
    <property type="method" value="EM"/>
    <property type="resolution" value="4.00 A"/>
    <property type="chains" value="G=1-236"/>
</dbReference>
<dbReference type="PDB" id="3JAM">
    <property type="method" value="EM"/>
    <property type="resolution" value="3.46 A"/>
    <property type="chains" value="G=1-236"/>
</dbReference>
<dbReference type="PDB" id="3JAP">
    <property type="method" value="EM"/>
    <property type="resolution" value="4.90 A"/>
    <property type="chains" value="G=1-236"/>
</dbReference>
<dbReference type="PDB" id="5IT7">
    <property type="method" value="EM"/>
    <property type="resolution" value="3.60 A"/>
    <property type="chains" value="G=1-226"/>
</dbReference>
<dbReference type="PDB" id="5IT9">
    <property type="method" value="EM"/>
    <property type="resolution" value="3.80 A"/>
    <property type="chains" value="G=1-226"/>
</dbReference>
<dbReference type="PDB" id="6FYX">
    <property type="method" value="EM"/>
    <property type="resolution" value="3.05 A"/>
    <property type="chains" value="G=1-236"/>
</dbReference>
<dbReference type="PDB" id="6FYY">
    <property type="method" value="EM"/>
    <property type="resolution" value="3.05 A"/>
    <property type="chains" value="G=1-236"/>
</dbReference>
<dbReference type="PDB" id="6GSM">
    <property type="method" value="EM"/>
    <property type="resolution" value="5.15 A"/>
    <property type="chains" value="G=1-226"/>
</dbReference>
<dbReference type="PDB" id="6GSN">
    <property type="method" value="EM"/>
    <property type="resolution" value="5.75 A"/>
    <property type="chains" value="G=1-226"/>
</dbReference>
<dbReference type="PDB" id="6UZ7">
    <property type="method" value="EM"/>
    <property type="resolution" value="3.60 A"/>
    <property type="chains" value="G=1-236"/>
</dbReference>
<dbReference type="PDB" id="8I7J">
    <property type="method" value="EM"/>
    <property type="resolution" value="4.60 A"/>
    <property type="chains" value="G=1-236"/>
</dbReference>
<dbReference type="PDB" id="8RW1">
    <property type="method" value="EM"/>
    <property type="resolution" value="3.35 A"/>
    <property type="chains" value="G=1-236"/>
</dbReference>
<dbReference type="PDB" id="8S8D">
    <property type="method" value="EM"/>
    <property type="resolution" value="3.45 A"/>
    <property type="chains" value="G=1-236"/>
</dbReference>
<dbReference type="PDB" id="8S8E">
    <property type="method" value="EM"/>
    <property type="resolution" value="3.85 A"/>
    <property type="chains" value="G=1-236"/>
</dbReference>
<dbReference type="PDB" id="8S8F">
    <property type="method" value="EM"/>
    <property type="resolution" value="3.95 A"/>
    <property type="chains" value="G=1-236"/>
</dbReference>
<dbReference type="PDB" id="8S8G">
    <property type="method" value="EM"/>
    <property type="resolution" value="4.00 A"/>
    <property type="chains" value="G=1-236"/>
</dbReference>
<dbReference type="PDB" id="8S8H">
    <property type="method" value="EM"/>
    <property type="resolution" value="4.00 A"/>
    <property type="chains" value="G=1-236"/>
</dbReference>
<dbReference type="PDB" id="8S8I">
    <property type="method" value="EM"/>
    <property type="resolution" value="4.30 A"/>
    <property type="chains" value="G=1-236"/>
</dbReference>
<dbReference type="PDB" id="8S8J">
    <property type="method" value="EM"/>
    <property type="resolution" value="4.70 A"/>
    <property type="chains" value="G=1-236"/>
</dbReference>
<dbReference type="PDB" id="8S8K">
    <property type="method" value="EM"/>
    <property type="resolution" value="4.00 A"/>
    <property type="chains" value="G=1-236"/>
</dbReference>
<dbReference type="PDBsum" id="3J80"/>
<dbReference type="PDBsum" id="3J81"/>
<dbReference type="PDBsum" id="3JAM"/>
<dbReference type="PDBsum" id="3JAP"/>
<dbReference type="PDBsum" id="5IT7"/>
<dbReference type="PDBsum" id="5IT9"/>
<dbReference type="PDBsum" id="6FYX"/>
<dbReference type="PDBsum" id="6FYY"/>
<dbReference type="PDBsum" id="6GSM"/>
<dbReference type="PDBsum" id="6GSN"/>
<dbReference type="PDBsum" id="6UZ7"/>
<dbReference type="PDBsum" id="8I7J"/>
<dbReference type="PDBsum" id="8RW1"/>
<dbReference type="PDBsum" id="8S8D"/>
<dbReference type="PDBsum" id="8S8E"/>
<dbReference type="PDBsum" id="8S8F"/>
<dbReference type="PDBsum" id="8S8G"/>
<dbReference type="PDBsum" id="8S8H"/>
<dbReference type="PDBsum" id="8S8I"/>
<dbReference type="PDBsum" id="8S8J"/>
<dbReference type="PDBsum" id="8S8K"/>
<dbReference type="EMDB" id="EMD-0057"/>
<dbReference type="EMDB" id="EMD-0058"/>
<dbReference type="EMDB" id="EMD-19541"/>
<dbReference type="EMDB" id="EMD-19801"/>
<dbReference type="EMDB" id="EMD-19802"/>
<dbReference type="EMDB" id="EMD-19803"/>
<dbReference type="EMDB" id="EMD-19804"/>
<dbReference type="EMDB" id="EMD-19805"/>
<dbReference type="EMDB" id="EMD-19806"/>
<dbReference type="EMDB" id="EMD-19807"/>
<dbReference type="EMDB" id="EMD-19808"/>
<dbReference type="EMDB" id="EMD-20952"/>
<dbReference type="EMDB" id="EMD-35216"/>
<dbReference type="EMDB" id="EMD-4327"/>
<dbReference type="EMDB" id="EMD-4328"/>
<dbReference type="EMDB" id="EMD-8123"/>
<dbReference type="EMDB" id="EMD-8124"/>
<dbReference type="SMR" id="Q6CM04"/>
<dbReference type="FunCoup" id="Q6CM04">
    <property type="interactions" value="1196"/>
</dbReference>
<dbReference type="STRING" id="284590.Q6CM04"/>
<dbReference type="PaxDb" id="284590-Q6CM04"/>
<dbReference type="KEGG" id="kla:KLLA0_E24047g"/>
<dbReference type="eggNOG" id="KOG1646">
    <property type="taxonomic scope" value="Eukaryota"/>
</dbReference>
<dbReference type="HOGENOM" id="CLU_046346_0_1_1"/>
<dbReference type="InParanoid" id="Q6CM04"/>
<dbReference type="OMA" id="KPRYKAP"/>
<dbReference type="Proteomes" id="UP000000598">
    <property type="component" value="Chromosome E"/>
</dbReference>
<dbReference type="GO" id="GO:1990904">
    <property type="term" value="C:ribonucleoprotein complex"/>
    <property type="evidence" value="ECO:0007669"/>
    <property type="project" value="UniProtKB-KW"/>
</dbReference>
<dbReference type="GO" id="GO:0005840">
    <property type="term" value="C:ribosome"/>
    <property type="evidence" value="ECO:0007669"/>
    <property type="project" value="UniProtKB-KW"/>
</dbReference>
<dbReference type="GO" id="GO:0003735">
    <property type="term" value="F:structural constituent of ribosome"/>
    <property type="evidence" value="ECO:0007669"/>
    <property type="project" value="InterPro"/>
</dbReference>
<dbReference type="GO" id="GO:0006412">
    <property type="term" value="P:translation"/>
    <property type="evidence" value="ECO:0007669"/>
    <property type="project" value="InterPro"/>
</dbReference>
<dbReference type="FunFam" id="1.20.5.2650:FF:000001">
    <property type="entry name" value="40S ribosomal protein S6"/>
    <property type="match status" value="1"/>
</dbReference>
<dbReference type="Gene3D" id="1.20.5.2650">
    <property type="match status" value="1"/>
</dbReference>
<dbReference type="InterPro" id="IPR001377">
    <property type="entry name" value="Ribosomal_eS6"/>
</dbReference>
<dbReference type="InterPro" id="IPR014401">
    <property type="entry name" value="Ribosomal_eS6-like"/>
</dbReference>
<dbReference type="InterPro" id="IPR018282">
    <property type="entry name" value="Ribosomal_eS6_CS"/>
</dbReference>
<dbReference type="PANTHER" id="PTHR11502">
    <property type="entry name" value="40S RIBOSOMAL PROTEIN S6"/>
    <property type="match status" value="1"/>
</dbReference>
<dbReference type="Pfam" id="PF01092">
    <property type="entry name" value="Ribosomal_S6e"/>
    <property type="match status" value="1"/>
</dbReference>
<dbReference type="PIRSF" id="PIRSF002129">
    <property type="entry name" value="Ribosom_S6_euk"/>
    <property type="match status" value="1"/>
</dbReference>
<dbReference type="SMART" id="SM01405">
    <property type="entry name" value="Ribosomal_S6e"/>
    <property type="match status" value="1"/>
</dbReference>
<dbReference type="PROSITE" id="PS00578">
    <property type="entry name" value="RIBOSOMAL_S6E"/>
    <property type="match status" value="1"/>
</dbReference>
<name>RS6_KLULA</name>
<comment type="PTM">
    <text evidence="1">Phosphorylated.</text>
</comment>
<comment type="similarity">
    <text evidence="3">Belongs to the eukaryotic ribosomal protein eS6 family.</text>
</comment>
<sequence>MKLNISYPINGTQKCIEIDDEHRVRVFYDKRIGQEVDGESVGDEFKGYVFKIAGGNDKQGFPMKQGVLLPTRVKLLLAKGHSCYRPRRNGERKRKSVRGAIVGPDLAVLALIITKKGEQEIEGITNDTVPKRLGPKRANNIRKFFGLTKEDDVRDYVIRREVTKGDKSYTKAPKIQRLVTPQRLQRKRQQKSLKIKNAQAQREAAAEYAQLLAKRLSERKAEKAEVRKRRASSLKA</sequence>
<organism>
    <name type="scientific">Kluyveromyces lactis (strain ATCC 8585 / CBS 2359 / DSM 70799 / NBRC 1267 / NRRL Y-1140 / WM37)</name>
    <name type="common">Yeast</name>
    <name type="synonym">Candida sphaerica</name>
    <dbReference type="NCBI Taxonomy" id="284590"/>
    <lineage>
        <taxon>Eukaryota</taxon>
        <taxon>Fungi</taxon>
        <taxon>Dikarya</taxon>
        <taxon>Ascomycota</taxon>
        <taxon>Saccharomycotina</taxon>
        <taxon>Saccharomycetes</taxon>
        <taxon>Saccharomycetales</taxon>
        <taxon>Saccharomycetaceae</taxon>
        <taxon>Kluyveromyces</taxon>
    </lineage>
</organism>